<name>MBHS_BRADU</name>
<sequence length="363" mass="39446">MGAATETFYSVIRRQGITRRSFHKFCSLTATSLGLGPLAASRIANALETKPRVPVIWMHGLECTCCSESFIRSAHPLVKDAVLSMISLDYDDTIMAAAGHQAEAILEETRAKHKGQYILAVEGNPPLNEGGMFCIDGGKPFVEKLKMMAEDAMAIIAWGACASWGCVQAAKPNPTQATPIDKVITNKPIIKVPGCPPIAEVMTGVVTFITTFGKLPELDRQGRPKMFYSQRIHDKCYRRPHFDAGQFVEEWDDEAARKGYCLYKMGCKGPTTYNACSTVRWNGGVSFPIQSGHGCIGCSEDGFWDKGSFYDRLTNIKQFGIEKNADQIGMVAAGAVGAAVAAHAAVTAVKRLATKREDADHNS</sequence>
<keyword id="KW-0003">3Fe-4S</keyword>
<keyword id="KW-0004">4Fe-4S</keyword>
<keyword id="KW-1003">Cell membrane</keyword>
<keyword id="KW-0408">Iron</keyword>
<keyword id="KW-0411">Iron-sulfur</keyword>
<keyword id="KW-0472">Membrane</keyword>
<keyword id="KW-0479">Metal-binding</keyword>
<keyword id="KW-0560">Oxidoreductase</keyword>
<keyword id="KW-1185">Reference proteome</keyword>
<keyword id="KW-0732">Signal</keyword>
<accession>P12635</accession>
<dbReference type="EC" id="1.12.99.6"/>
<dbReference type="EMBL" id="J04114">
    <property type="protein sequence ID" value="AAA26218.1"/>
    <property type="molecule type" value="Genomic_DNA"/>
</dbReference>
<dbReference type="EMBL" id="BA000040">
    <property type="protein sequence ID" value="BAC52207.1"/>
    <property type="molecule type" value="Genomic_DNA"/>
</dbReference>
<dbReference type="PIR" id="A31341">
    <property type="entry name" value="HQZJUS"/>
</dbReference>
<dbReference type="RefSeq" id="NP_773582.1">
    <property type="nucleotide sequence ID" value="NC_004463.1"/>
</dbReference>
<dbReference type="RefSeq" id="WP_011089680.1">
    <property type="nucleotide sequence ID" value="NC_004463.1"/>
</dbReference>
<dbReference type="SMR" id="P12635"/>
<dbReference type="FunCoup" id="P12635">
    <property type="interactions" value="144"/>
</dbReference>
<dbReference type="STRING" id="224911.AAV28_32300"/>
<dbReference type="EnsemblBacteria" id="BAC52207">
    <property type="protein sequence ID" value="BAC52207"/>
    <property type="gene ID" value="BAC52207"/>
</dbReference>
<dbReference type="GeneID" id="46493908"/>
<dbReference type="KEGG" id="bja:bll6942"/>
<dbReference type="PATRIC" id="fig|224911.44.peg.6976"/>
<dbReference type="eggNOG" id="COG1740">
    <property type="taxonomic scope" value="Bacteria"/>
</dbReference>
<dbReference type="HOGENOM" id="CLU_046107_0_0_5"/>
<dbReference type="InParanoid" id="P12635"/>
<dbReference type="OrthoDB" id="9766729at2"/>
<dbReference type="PhylomeDB" id="P12635"/>
<dbReference type="Proteomes" id="UP000002526">
    <property type="component" value="Chromosome"/>
</dbReference>
<dbReference type="GO" id="GO:0044569">
    <property type="term" value="C:[Ni-Fe] hydrogenase complex"/>
    <property type="evidence" value="ECO:0000318"/>
    <property type="project" value="GO_Central"/>
</dbReference>
<dbReference type="GO" id="GO:0009375">
    <property type="term" value="C:ferredoxin hydrogenase complex"/>
    <property type="evidence" value="ECO:0007669"/>
    <property type="project" value="InterPro"/>
</dbReference>
<dbReference type="GO" id="GO:0016020">
    <property type="term" value="C:membrane"/>
    <property type="evidence" value="ECO:0000318"/>
    <property type="project" value="GO_Central"/>
</dbReference>
<dbReference type="GO" id="GO:0005886">
    <property type="term" value="C:plasma membrane"/>
    <property type="evidence" value="ECO:0007669"/>
    <property type="project" value="UniProtKB-SubCell"/>
</dbReference>
<dbReference type="GO" id="GO:0051538">
    <property type="term" value="F:3 iron, 4 sulfur cluster binding"/>
    <property type="evidence" value="ECO:0007669"/>
    <property type="project" value="UniProtKB-KW"/>
</dbReference>
<dbReference type="GO" id="GO:0051539">
    <property type="term" value="F:4 iron, 4 sulfur cluster binding"/>
    <property type="evidence" value="ECO:0007669"/>
    <property type="project" value="UniProtKB-KW"/>
</dbReference>
<dbReference type="GO" id="GO:0009055">
    <property type="term" value="F:electron transfer activity"/>
    <property type="evidence" value="ECO:0000318"/>
    <property type="project" value="GO_Central"/>
</dbReference>
<dbReference type="GO" id="GO:0008901">
    <property type="term" value="F:ferredoxin hydrogenase activity"/>
    <property type="evidence" value="ECO:0007669"/>
    <property type="project" value="InterPro"/>
</dbReference>
<dbReference type="GO" id="GO:0033748">
    <property type="term" value="F:hydrogenase (acceptor) activity"/>
    <property type="evidence" value="ECO:0007669"/>
    <property type="project" value="UniProtKB-EC"/>
</dbReference>
<dbReference type="GO" id="GO:0046872">
    <property type="term" value="F:metal ion binding"/>
    <property type="evidence" value="ECO:0007669"/>
    <property type="project" value="UniProtKB-KW"/>
</dbReference>
<dbReference type="GO" id="GO:0009061">
    <property type="term" value="P:anaerobic respiration"/>
    <property type="evidence" value="ECO:0000318"/>
    <property type="project" value="GO_Central"/>
</dbReference>
<dbReference type="FunFam" id="4.10.480.10:FF:000002">
    <property type="entry name" value="Hydrogenase-1 small chain"/>
    <property type="match status" value="1"/>
</dbReference>
<dbReference type="Gene3D" id="4.10.480.10">
    <property type="entry name" value="Cytochrome-c3 hydrogenase, C-terminal domain"/>
    <property type="match status" value="1"/>
</dbReference>
<dbReference type="Gene3D" id="3.40.50.700">
    <property type="entry name" value="NADH:ubiquinone oxidoreductase-like, 20kDa subunit"/>
    <property type="match status" value="1"/>
</dbReference>
<dbReference type="InterPro" id="IPR027394">
    <property type="entry name" value="Cytochrome-c3_hydrogenase_C"/>
</dbReference>
<dbReference type="InterPro" id="IPR006137">
    <property type="entry name" value="NADH_UbQ_OxRdtase-like_20kDa"/>
</dbReference>
<dbReference type="InterPro" id="IPR037148">
    <property type="entry name" value="NiFe-Hase_small_C_sf"/>
</dbReference>
<dbReference type="InterPro" id="IPR037024">
    <property type="entry name" value="NiFe_Hase_small_N_sf"/>
</dbReference>
<dbReference type="InterPro" id="IPR001821">
    <property type="entry name" value="NiFe_hydrogenase_ssu"/>
</dbReference>
<dbReference type="InterPro" id="IPR006311">
    <property type="entry name" value="TAT_signal"/>
</dbReference>
<dbReference type="InterPro" id="IPR019546">
    <property type="entry name" value="TAT_signal_bac_arc"/>
</dbReference>
<dbReference type="NCBIfam" id="TIGR00391">
    <property type="entry name" value="hydA"/>
    <property type="match status" value="1"/>
</dbReference>
<dbReference type="NCBIfam" id="TIGR01409">
    <property type="entry name" value="TAT_signal_seq"/>
    <property type="match status" value="1"/>
</dbReference>
<dbReference type="PANTHER" id="PTHR30013:SF6">
    <property type="entry name" value="HYDROGENASE-1 SMALL CHAIN"/>
    <property type="match status" value="1"/>
</dbReference>
<dbReference type="PANTHER" id="PTHR30013">
    <property type="entry name" value="NIFE / NIFESE HYDROGENASE SMALL SUBUNIT FAMILY MEMBER"/>
    <property type="match status" value="1"/>
</dbReference>
<dbReference type="Pfam" id="PF14720">
    <property type="entry name" value="NiFe_hyd_SSU_C"/>
    <property type="match status" value="1"/>
</dbReference>
<dbReference type="Pfam" id="PF01058">
    <property type="entry name" value="Oxidored_q6"/>
    <property type="match status" value="1"/>
</dbReference>
<dbReference type="PIRSF" id="PIRSF000310">
    <property type="entry name" value="NiFe_hyd_ssu"/>
    <property type="match status" value="1"/>
</dbReference>
<dbReference type="PRINTS" id="PR00614">
    <property type="entry name" value="NIHGNASESMLL"/>
</dbReference>
<dbReference type="SUPFAM" id="SSF56770">
    <property type="entry name" value="HydA/Nqo6-like"/>
    <property type="match status" value="1"/>
</dbReference>
<dbReference type="PROSITE" id="PS51318">
    <property type="entry name" value="TAT"/>
    <property type="match status" value="1"/>
</dbReference>
<proteinExistence type="inferred from homology"/>
<feature type="signal peptide" description="Tat-type signal" evidence="2">
    <location>
        <begin position="1"/>
        <end position="46"/>
    </location>
</feature>
<feature type="chain" id="PRO_0000013425" description="Uptake hydrogenase small subunit">
    <location>
        <begin position="47"/>
        <end position="363"/>
    </location>
</feature>
<feature type="binding site" evidence="1">
    <location>
        <position position="63"/>
    </location>
    <ligand>
        <name>[4Fe-4S] cluster</name>
        <dbReference type="ChEBI" id="CHEBI:49883"/>
        <label>1</label>
    </ligand>
</feature>
<feature type="binding site" evidence="1">
    <location>
        <position position="66"/>
    </location>
    <ligand>
        <name>[4Fe-4S] cluster</name>
        <dbReference type="ChEBI" id="CHEBI:49883"/>
        <label>1</label>
    </ligand>
</feature>
<feature type="binding site" evidence="1">
    <location>
        <position position="161"/>
    </location>
    <ligand>
        <name>[4Fe-4S] cluster</name>
        <dbReference type="ChEBI" id="CHEBI:49883"/>
        <label>1</label>
    </ligand>
</feature>
<feature type="binding site" evidence="1">
    <location>
        <position position="195"/>
    </location>
    <ligand>
        <name>[4Fe-4S] cluster</name>
        <dbReference type="ChEBI" id="CHEBI:49883"/>
        <label>1</label>
    </ligand>
</feature>
<feature type="binding site" evidence="1">
    <location>
        <position position="233"/>
    </location>
    <ligand>
        <name>[4Fe-4S] cluster</name>
        <dbReference type="ChEBI" id="CHEBI:49883"/>
        <label>2</label>
    </ligand>
</feature>
<feature type="binding site" evidence="1">
    <location>
        <position position="236"/>
    </location>
    <ligand>
        <name>[4Fe-4S] cluster</name>
        <dbReference type="ChEBI" id="CHEBI:49883"/>
        <label>2</label>
    </ligand>
</feature>
<feature type="binding site" evidence="1">
    <location>
        <position position="261"/>
    </location>
    <ligand>
        <name>[4Fe-4S] cluster</name>
        <dbReference type="ChEBI" id="CHEBI:49883"/>
        <label>2</label>
    </ligand>
</feature>
<feature type="binding site" evidence="1">
    <location>
        <position position="267"/>
    </location>
    <ligand>
        <name>[4Fe-4S] cluster</name>
        <dbReference type="ChEBI" id="CHEBI:49883"/>
        <label>2</label>
    </ligand>
</feature>
<feature type="binding site" evidence="1">
    <location>
        <position position="276"/>
    </location>
    <ligand>
        <name>[3Fe-4S] cluster</name>
        <dbReference type="ChEBI" id="CHEBI:21137"/>
    </ligand>
</feature>
<feature type="binding site" evidence="1">
    <location>
        <position position="295"/>
    </location>
    <ligand>
        <name>[3Fe-4S] cluster</name>
        <dbReference type="ChEBI" id="CHEBI:21137"/>
    </ligand>
</feature>
<feature type="binding site" evidence="1">
    <location>
        <position position="298"/>
    </location>
    <ligand>
        <name>[3Fe-4S] cluster</name>
        <dbReference type="ChEBI" id="CHEBI:21137"/>
    </ligand>
</feature>
<organism>
    <name type="scientific">Bradyrhizobium diazoefficiens (strain JCM 10833 / BCRC 13528 / IAM 13628 / NBRC 14792 / USDA 110)</name>
    <dbReference type="NCBI Taxonomy" id="224911"/>
    <lineage>
        <taxon>Bacteria</taxon>
        <taxon>Pseudomonadati</taxon>
        <taxon>Pseudomonadota</taxon>
        <taxon>Alphaproteobacteria</taxon>
        <taxon>Hyphomicrobiales</taxon>
        <taxon>Nitrobacteraceae</taxon>
        <taxon>Bradyrhizobium</taxon>
    </lineage>
</organism>
<reference key="1">
    <citation type="journal article" date="1988" name="Proc. Natl. Acad. Sci. U.S.A.">
        <title>Nucleotide sequence of the genetic loci encoding subunits of Bradyrhizobium japonicum uptake hydrogenase.</title>
        <authorList>
            <person name="Sayavedra-Soto L.A."/>
            <person name="Powell G.K."/>
            <person name="Evans H.J."/>
            <person name="Morris R.O."/>
        </authorList>
    </citation>
    <scope>NUCLEOTIDE SEQUENCE [GENOMIC DNA]</scope>
</reference>
<reference key="2">
    <citation type="journal article" date="2002" name="DNA Res.">
        <title>Complete genomic sequence of nitrogen-fixing symbiotic bacterium Bradyrhizobium japonicum USDA110.</title>
        <authorList>
            <person name="Kaneko T."/>
            <person name="Nakamura Y."/>
            <person name="Sato S."/>
            <person name="Minamisawa K."/>
            <person name="Uchiumi T."/>
            <person name="Sasamoto S."/>
            <person name="Watanabe A."/>
            <person name="Idesawa K."/>
            <person name="Iriguchi M."/>
            <person name="Kawashima K."/>
            <person name="Kohara M."/>
            <person name="Matsumoto M."/>
            <person name="Shimpo S."/>
            <person name="Tsuruoka H."/>
            <person name="Wada T."/>
            <person name="Yamada M."/>
            <person name="Tabata S."/>
        </authorList>
    </citation>
    <scope>NUCLEOTIDE SEQUENCE [LARGE SCALE GENOMIC DNA]</scope>
    <source>
        <strain>JCM 10833 / BCRC 13528 / IAM 13628 / NBRC 14792 / USDA 110</strain>
    </source>
</reference>
<comment type="function">
    <text>This enzyme recycles the H(2) produced by nitrogenase to increase the production of ATP and to protect nitrogenase against inhibition or damage by O(2) under carbon- or phosphate-limited conditions.</text>
</comment>
<comment type="catalytic activity">
    <reaction>
        <text>H2 + A = AH2</text>
        <dbReference type="Rhea" id="RHEA:12116"/>
        <dbReference type="ChEBI" id="CHEBI:13193"/>
        <dbReference type="ChEBI" id="CHEBI:17499"/>
        <dbReference type="ChEBI" id="CHEBI:18276"/>
        <dbReference type="EC" id="1.12.99.6"/>
    </reaction>
</comment>
<comment type="cofactor">
    <cofactor evidence="1">
        <name>[4Fe-4S] cluster</name>
        <dbReference type="ChEBI" id="CHEBI:49883"/>
    </cofactor>
    <text evidence="1">Binds 2 [4Fe-4S] clusters.</text>
</comment>
<comment type="cofactor">
    <cofactor evidence="1">
        <name>[3Fe-4S] cluster</name>
        <dbReference type="ChEBI" id="CHEBI:21137"/>
    </cofactor>
    <text evidence="1">Binds 1 [3Fe-4S] cluster.</text>
</comment>
<comment type="subunit">
    <text>Heterodimer of a large and a small subunit.</text>
</comment>
<comment type="subcellular location">
    <subcellularLocation>
        <location>Cell membrane</location>
        <topology>Peripheral membrane protein</topology>
    </subcellularLocation>
</comment>
<comment type="PTM">
    <text>Predicted to be exported by the Tat system. The position of the signal peptide cleavage has not been experimentally proven.</text>
</comment>
<comment type="similarity">
    <text evidence="3">Belongs to the [NiFe]/[NiFeSe] hydrogenase small subunit family.</text>
</comment>
<gene>
    <name type="primary">hupA</name>
    <name type="synonym">hupS</name>
    <name type="ordered locus">bll6942</name>
</gene>
<evidence type="ECO:0000250" key="1">
    <source>
        <dbReference type="UniProtKB" id="P21853"/>
    </source>
</evidence>
<evidence type="ECO:0000255" key="2">
    <source>
        <dbReference type="PROSITE-ProRule" id="PRU00648"/>
    </source>
</evidence>
<evidence type="ECO:0000305" key="3"/>
<protein>
    <recommendedName>
        <fullName>Uptake hydrogenase small subunit</fullName>
        <ecNumber>1.12.99.6</ecNumber>
    </recommendedName>
    <alternativeName>
        <fullName>Hydrogenlyase</fullName>
    </alternativeName>
    <alternativeName>
        <fullName>Membrane-bound hydrogenase small subunit</fullName>
    </alternativeName>
</protein>